<organism>
    <name type="scientific">Salmonella gallinarum (strain 287/91 / NCTC 13346)</name>
    <dbReference type="NCBI Taxonomy" id="550538"/>
    <lineage>
        <taxon>Bacteria</taxon>
        <taxon>Pseudomonadati</taxon>
        <taxon>Pseudomonadota</taxon>
        <taxon>Gammaproteobacteria</taxon>
        <taxon>Enterobacterales</taxon>
        <taxon>Enterobacteriaceae</taxon>
        <taxon>Salmonella</taxon>
    </lineage>
</organism>
<reference key="1">
    <citation type="journal article" date="2008" name="Genome Res.">
        <title>Comparative genome analysis of Salmonella enteritidis PT4 and Salmonella gallinarum 287/91 provides insights into evolutionary and host adaptation pathways.</title>
        <authorList>
            <person name="Thomson N.R."/>
            <person name="Clayton D.J."/>
            <person name="Windhorst D."/>
            <person name="Vernikos G."/>
            <person name="Davidson S."/>
            <person name="Churcher C."/>
            <person name="Quail M.A."/>
            <person name="Stevens M."/>
            <person name="Jones M.A."/>
            <person name="Watson M."/>
            <person name="Barron A."/>
            <person name="Layton A."/>
            <person name="Pickard D."/>
            <person name="Kingsley R.A."/>
            <person name="Bignell A."/>
            <person name="Clark L."/>
            <person name="Harris B."/>
            <person name="Ormond D."/>
            <person name="Abdellah Z."/>
            <person name="Brooks K."/>
            <person name="Cherevach I."/>
            <person name="Chillingworth T."/>
            <person name="Woodward J."/>
            <person name="Norberczak H."/>
            <person name="Lord A."/>
            <person name="Arrowsmith C."/>
            <person name="Jagels K."/>
            <person name="Moule S."/>
            <person name="Mungall K."/>
            <person name="Saunders M."/>
            <person name="Whitehead S."/>
            <person name="Chabalgoity J.A."/>
            <person name="Maskell D."/>
            <person name="Humphreys T."/>
            <person name="Roberts M."/>
            <person name="Barrow P.A."/>
            <person name="Dougan G."/>
            <person name="Parkhill J."/>
        </authorList>
    </citation>
    <scope>NUCLEOTIDE SEQUENCE [LARGE SCALE GENOMIC DNA]</scope>
    <source>
        <strain>287/91 / NCTC 13346</strain>
    </source>
</reference>
<feature type="chain" id="PRO_1000126718" description="Large ribosomal subunit protein bL31">
    <location>
        <begin position="1"/>
        <end position="70"/>
    </location>
</feature>
<feature type="binding site" evidence="1">
    <location>
        <position position="16"/>
    </location>
    <ligand>
        <name>Zn(2+)</name>
        <dbReference type="ChEBI" id="CHEBI:29105"/>
    </ligand>
</feature>
<feature type="binding site" evidence="1">
    <location>
        <position position="18"/>
    </location>
    <ligand>
        <name>Zn(2+)</name>
        <dbReference type="ChEBI" id="CHEBI:29105"/>
    </ligand>
</feature>
<feature type="binding site" evidence="1">
    <location>
        <position position="37"/>
    </location>
    <ligand>
        <name>Zn(2+)</name>
        <dbReference type="ChEBI" id="CHEBI:29105"/>
    </ligand>
</feature>
<feature type="binding site" evidence="1">
    <location>
        <position position="40"/>
    </location>
    <ligand>
        <name>Zn(2+)</name>
        <dbReference type="ChEBI" id="CHEBI:29105"/>
    </ligand>
</feature>
<evidence type="ECO:0000255" key="1">
    <source>
        <dbReference type="HAMAP-Rule" id="MF_00501"/>
    </source>
</evidence>
<evidence type="ECO:0000305" key="2"/>
<keyword id="KW-0479">Metal-binding</keyword>
<keyword id="KW-0687">Ribonucleoprotein</keyword>
<keyword id="KW-0689">Ribosomal protein</keyword>
<keyword id="KW-0694">RNA-binding</keyword>
<keyword id="KW-0699">rRNA-binding</keyword>
<keyword id="KW-0862">Zinc</keyword>
<name>RL31_SALG2</name>
<protein>
    <recommendedName>
        <fullName evidence="1">Large ribosomal subunit protein bL31</fullName>
    </recommendedName>
    <alternativeName>
        <fullName evidence="2">50S ribosomal protein L31</fullName>
    </alternativeName>
</protein>
<dbReference type="EMBL" id="AM933173">
    <property type="protein sequence ID" value="CAR39118.1"/>
    <property type="molecule type" value="Genomic_DNA"/>
</dbReference>
<dbReference type="RefSeq" id="WP_000715284.1">
    <property type="nucleotide sequence ID" value="NC_011274.1"/>
</dbReference>
<dbReference type="SMR" id="B5RF75"/>
<dbReference type="GeneID" id="66758349"/>
<dbReference type="KEGG" id="seg:SG3324"/>
<dbReference type="HOGENOM" id="CLU_114306_4_3_6"/>
<dbReference type="Proteomes" id="UP000008321">
    <property type="component" value="Chromosome"/>
</dbReference>
<dbReference type="GO" id="GO:1990904">
    <property type="term" value="C:ribonucleoprotein complex"/>
    <property type="evidence" value="ECO:0007669"/>
    <property type="project" value="UniProtKB-KW"/>
</dbReference>
<dbReference type="GO" id="GO:0005840">
    <property type="term" value="C:ribosome"/>
    <property type="evidence" value="ECO:0007669"/>
    <property type="project" value="UniProtKB-KW"/>
</dbReference>
<dbReference type="GO" id="GO:0046872">
    <property type="term" value="F:metal ion binding"/>
    <property type="evidence" value="ECO:0007669"/>
    <property type="project" value="UniProtKB-KW"/>
</dbReference>
<dbReference type="GO" id="GO:0019843">
    <property type="term" value="F:rRNA binding"/>
    <property type="evidence" value="ECO:0007669"/>
    <property type="project" value="UniProtKB-KW"/>
</dbReference>
<dbReference type="GO" id="GO:0003735">
    <property type="term" value="F:structural constituent of ribosome"/>
    <property type="evidence" value="ECO:0007669"/>
    <property type="project" value="InterPro"/>
</dbReference>
<dbReference type="GO" id="GO:0006412">
    <property type="term" value="P:translation"/>
    <property type="evidence" value="ECO:0007669"/>
    <property type="project" value="UniProtKB-UniRule"/>
</dbReference>
<dbReference type="FunFam" id="4.10.830.30:FF:000001">
    <property type="entry name" value="50S ribosomal protein L31"/>
    <property type="match status" value="1"/>
</dbReference>
<dbReference type="Gene3D" id="4.10.830.30">
    <property type="entry name" value="Ribosomal protein L31"/>
    <property type="match status" value="1"/>
</dbReference>
<dbReference type="HAMAP" id="MF_00501">
    <property type="entry name" value="Ribosomal_bL31_1"/>
    <property type="match status" value="1"/>
</dbReference>
<dbReference type="InterPro" id="IPR034704">
    <property type="entry name" value="Ribosomal_bL28/bL31-like_sf"/>
</dbReference>
<dbReference type="InterPro" id="IPR002150">
    <property type="entry name" value="Ribosomal_bL31"/>
</dbReference>
<dbReference type="InterPro" id="IPR027491">
    <property type="entry name" value="Ribosomal_bL31_A"/>
</dbReference>
<dbReference type="InterPro" id="IPR042105">
    <property type="entry name" value="Ribosomal_bL31_sf"/>
</dbReference>
<dbReference type="NCBIfam" id="TIGR00105">
    <property type="entry name" value="L31"/>
    <property type="match status" value="1"/>
</dbReference>
<dbReference type="NCBIfam" id="NF000612">
    <property type="entry name" value="PRK00019.1"/>
    <property type="match status" value="1"/>
</dbReference>
<dbReference type="NCBIfam" id="NF001809">
    <property type="entry name" value="PRK00528.1"/>
    <property type="match status" value="1"/>
</dbReference>
<dbReference type="PANTHER" id="PTHR33280">
    <property type="entry name" value="50S RIBOSOMAL PROTEIN L31, CHLOROPLASTIC"/>
    <property type="match status" value="1"/>
</dbReference>
<dbReference type="PANTHER" id="PTHR33280:SF6">
    <property type="entry name" value="LARGE RIBOSOMAL SUBUNIT PROTEIN BL31A"/>
    <property type="match status" value="1"/>
</dbReference>
<dbReference type="Pfam" id="PF01197">
    <property type="entry name" value="Ribosomal_L31"/>
    <property type="match status" value="1"/>
</dbReference>
<dbReference type="PRINTS" id="PR01249">
    <property type="entry name" value="RIBOSOMALL31"/>
</dbReference>
<dbReference type="SUPFAM" id="SSF143800">
    <property type="entry name" value="L28p-like"/>
    <property type="match status" value="1"/>
</dbReference>
<dbReference type="PROSITE" id="PS01143">
    <property type="entry name" value="RIBOSOMAL_L31"/>
    <property type="match status" value="1"/>
</dbReference>
<gene>
    <name evidence="1" type="primary">rpmE</name>
    <name type="ordered locus">SG3324</name>
</gene>
<accession>B5RF75</accession>
<proteinExistence type="inferred from homology"/>
<comment type="function">
    <text evidence="1">Binds the 23S rRNA.</text>
</comment>
<comment type="cofactor">
    <cofactor evidence="1">
        <name>Zn(2+)</name>
        <dbReference type="ChEBI" id="CHEBI:29105"/>
    </cofactor>
    <text evidence="1">Binds 1 zinc ion per subunit.</text>
</comment>
<comment type="subunit">
    <text evidence="1">Part of the 50S ribosomal subunit.</text>
</comment>
<comment type="similarity">
    <text evidence="1">Belongs to the bacterial ribosomal protein bL31 family. Type A subfamily.</text>
</comment>
<sequence>MKKGIHPNYVEITATCSCGNVIKTHSTVGHDLNLDVCGKCHPFFTGKQRVVDTGGRVERFNKRFSIPGSK</sequence>